<name>CNU_ECO57</name>
<proteinExistence type="inferred from homology"/>
<comment type="function">
    <text evidence="2">Modifies the set of genes regulated by H-NS; Hha and cnu (YdgT) increase the number of genes bound by H-NS/StpA and may also modulate the oligomerization of the H-NS/StpA-complex on DNA. The complex formed with H-NS binds to the specific 26-bp cnb site in the origin of replication oriC.</text>
</comment>
<comment type="subunit">
    <text evidence="2">Forms complexes with both H-NS and StpA.</text>
</comment>
<comment type="similarity">
    <text evidence="3">Belongs to the Hha/YmoA/Cnu family.</text>
</comment>
<organism>
    <name type="scientific">Escherichia coli O157:H7</name>
    <dbReference type="NCBI Taxonomy" id="83334"/>
    <lineage>
        <taxon>Bacteria</taxon>
        <taxon>Pseudomonadati</taxon>
        <taxon>Pseudomonadota</taxon>
        <taxon>Gammaproteobacteria</taxon>
        <taxon>Enterobacterales</taxon>
        <taxon>Enterobacteriaceae</taxon>
        <taxon>Escherichia</taxon>
    </lineage>
</organism>
<feature type="chain" id="PRO_0000201735" description="OriC-binding nucleoid-associated protein">
    <location>
        <begin position="1"/>
        <end position="71"/>
    </location>
</feature>
<feature type="site" description="Interacts with H-NS" evidence="1">
    <location>
        <position position="44"/>
    </location>
</feature>
<evidence type="ECO:0000250" key="1"/>
<evidence type="ECO:0000250" key="2">
    <source>
        <dbReference type="UniProtKB" id="P64467"/>
    </source>
</evidence>
<evidence type="ECO:0000305" key="3"/>
<reference key="1">
    <citation type="journal article" date="2001" name="Nature">
        <title>Genome sequence of enterohaemorrhagic Escherichia coli O157:H7.</title>
        <authorList>
            <person name="Perna N.T."/>
            <person name="Plunkett G. III"/>
            <person name="Burland V."/>
            <person name="Mau B."/>
            <person name="Glasner J.D."/>
            <person name="Rose D.J."/>
            <person name="Mayhew G.F."/>
            <person name="Evans P.S."/>
            <person name="Gregor J."/>
            <person name="Kirkpatrick H.A."/>
            <person name="Posfai G."/>
            <person name="Hackett J."/>
            <person name="Klink S."/>
            <person name="Boutin A."/>
            <person name="Shao Y."/>
            <person name="Miller L."/>
            <person name="Grotbeck E.J."/>
            <person name="Davis N.W."/>
            <person name="Lim A."/>
            <person name="Dimalanta E.T."/>
            <person name="Potamousis K."/>
            <person name="Apodaca J."/>
            <person name="Anantharaman T.S."/>
            <person name="Lin J."/>
            <person name="Yen G."/>
            <person name="Schwartz D.C."/>
            <person name="Welch R.A."/>
            <person name="Blattner F.R."/>
        </authorList>
    </citation>
    <scope>NUCLEOTIDE SEQUENCE [LARGE SCALE GENOMIC DNA]</scope>
    <source>
        <strain>O157:H7 / EDL933 / ATCC 700927 / EHEC</strain>
    </source>
</reference>
<reference key="2">
    <citation type="journal article" date="2001" name="DNA Res.">
        <title>Complete genome sequence of enterohemorrhagic Escherichia coli O157:H7 and genomic comparison with a laboratory strain K-12.</title>
        <authorList>
            <person name="Hayashi T."/>
            <person name="Makino K."/>
            <person name="Ohnishi M."/>
            <person name="Kurokawa K."/>
            <person name="Ishii K."/>
            <person name="Yokoyama K."/>
            <person name="Han C.-G."/>
            <person name="Ohtsubo E."/>
            <person name="Nakayama K."/>
            <person name="Murata T."/>
            <person name="Tanaka M."/>
            <person name="Tobe T."/>
            <person name="Iida T."/>
            <person name="Takami H."/>
            <person name="Honda T."/>
            <person name="Sasakawa C."/>
            <person name="Ogasawara N."/>
            <person name="Yasunaga T."/>
            <person name="Kuhara S."/>
            <person name="Shiba T."/>
            <person name="Hattori M."/>
            <person name="Shinagawa H."/>
        </authorList>
    </citation>
    <scope>NUCLEOTIDE SEQUENCE [LARGE SCALE GENOMIC DNA]</scope>
    <source>
        <strain>O157:H7 / Sakai / RIMD 0509952 / EHEC</strain>
    </source>
</reference>
<accession>P64469</accession>
<accession>P76179</accession>
<keyword id="KW-0238">DNA-binding</keyword>
<keyword id="KW-1185">Reference proteome</keyword>
<keyword id="KW-0804">Transcription</keyword>
<keyword id="KW-0805">Transcription regulation</keyword>
<gene>
    <name type="primary">cnu</name>
    <name type="synonym">ydgT</name>
    <name type="ordered locus">Z2631</name>
    <name type="ordered locus">ECs2334</name>
</gene>
<dbReference type="EMBL" id="AE005174">
    <property type="protein sequence ID" value="AAG56614.1"/>
    <property type="molecule type" value="Genomic_DNA"/>
</dbReference>
<dbReference type="EMBL" id="BA000007">
    <property type="protein sequence ID" value="BAB35757.1"/>
    <property type="molecule type" value="Genomic_DNA"/>
</dbReference>
<dbReference type="PIR" id="B85769">
    <property type="entry name" value="B85769"/>
</dbReference>
<dbReference type="PIR" id="F90920">
    <property type="entry name" value="F90920"/>
</dbReference>
<dbReference type="RefSeq" id="NP_310361.1">
    <property type="nucleotide sequence ID" value="NC_002695.1"/>
</dbReference>
<dbReference type="RefSeq" id="WP_000217950.1">
    <property type="nucleotide sequence ID" value="NZ_VOAI01000007.1"/>
</dbReference>
<dbReference type="SMR" id="P64469"/>
<dbReference type="STRING" id="155864.Z2631"/>
<dbReference type="GeneID" id="912671"/>
<dbReference type="GeneID" id="93775777"/>
<dbReference type="KEGG" id="ece:Z2631"/>
<dbReference type="KEGG" id="ecs:ECs_2334"/>
<dbReference type="PATRIC" id="fig|386585.9.peg.2443"/>
<dbReference type="eggNOG" id="ENOG5032S5U">
    <property type="taxonomic scope" value="Bacteria"/>
</dbReference>
<dbReference type="HOGENOM" id="CLU_190629_0_0_6"/>
<dbReference type="OMA" id="PKSVWHF"/>
<dbReference type="Proteomes" id="UP000000558">
    <property type="component" value="Chromosome"/>
</dbReference>
<dbReference type="Proteomes" id="UP000002519">
    <property type="component" value="Chromosome"/>
</dbReference>
<dbReference type="GO" id="GO:0003677">
    <property type="term" value="F:DNA binding"/>
    <property type="evidence" value="ECO:0007669"/>
    <property type="project" value="UniProtKB-KW"/>
</dbReference>
<dbReference type="FunFam" id="1.20.1280.40:FF:000002">
    <property type="entry name" value="OriC-binding nucleoid-associated protein"/>
    <property type="match status" value="1"/>
</dbReference>
<dbReference type="Gene3D" id="1.20.1280.40">
    <property type="entry name" value="HHA"/>
    <property type="match status" value="1"/>
</dbReference>
<dbReference type="InterPro" id="IPR007985">
    <property type="entry name" value="Hemolysn_expr_modulating_HHA"/>
</dbReference>
<dbReference type="InterPro" id="IPR036666">
    <property type="entry name" value="HHA_sf"/>
</dbReference>
<dbReference type="NCBIfam" id="NF007703">
    <property type="entry name" value="PRK10391.1"/>
    <property type="match status" value="1"/>
</dbReference>
<dbReference type="Pfam" id="PF05321">
    <property type="entry name" value="HHA"/>
    <property type="match status" value="1"/>
</dbReference>
<dbReference type="SUPFAM" id="SSF68989">
    <property type="entry name" value="Hemolysin expression modulating protein HHA"/>
    <property type="match status" value="1"/>
</dbReference>
<sequence>MTVQDYLLKFRKISSLESLEKLYDHLNYTLTDDQELINMYRAADHRRAELVSGGRLFDLGQVPKSVWHYVQ</sequence>
<protein>
    <recommendedName>
        <fullName>OriC-binding nucleoid-associated protein</fullName>
    </recommendedName>
    <alternativeName>
        <fullName>H-NS/StpA-binding protein 2</fullName>
    </alternativeName>
    <alternativeName>
        <fullName>Transcription modulator YdgT</fullName>
    </alternativeName>
</protein>